<gene>
    <name type="primary">PUB32</name>
    <name type="ordered locus">At3g49060</name>
    <name type="ORF">T2J13.100</name>
</gene>
<sequence length="805" mass="91593">MGEIGGEELVLDVDETIFVAVAEDVERSKTTVLWAARNFSGKKICLLYVHRTARAASWTHKKLVGGSFKKHDVKVIERVEKPKVDELMNSYLQLLSETEIQTDKLCIAGQNIEECIVELIARHKIKWLVMGAASDKHYSWKMTDLKSKKAIFVCKKAPDSCHIWFLCKGYLIFTRASNDDSNNRQTMPPLVQLDSDNETRKSEKLESSYMRRRLRYWRSLLEQDGEKDTGQLEREKVEPRAPPLFSSGSSSSFGEPVGPEPVSPELVDSDTLNTSNVEEKEREGDVARKVHRYDKAMHDIGQSDRTVYGEAGKKWEEDASTTEALCKAKALEGLCIKESSQRKRLEELLEKEKLEVKMVIEQNNGFMKELQMVQGRNLKLESQMRKLQDLEKEHGEKFDTAMELLKSFRQKRDEIRIDHENAVKEVNALRRLVKGETGESSGSEMLDYSFMEINEATNEFDPSWKLGEGKYGSVYKGNLQHLQVAVKMLPSYGSLNHFEFERRVEILSRVRHPNLVTLMGACPESRSLIYQYIPNGSLEDCFSSENNVPALSWESRIRIASEICSALLFLHSNIPCIIHGNLKPSKILLDSNLVTKINDYGISQLIPIDGLDKSDPHVDPHYFVSREMTLESDIYAFGIILLQLLTRRPVSGILRDVKCALENDNISAVLDNSAGDWPVARGKKLANVAIRCCKKNPMNRPDLAVVLRFIDRMKAPEVPSSETSSYANQNVPRRPPSHYLCPIFQEVMKDPLIAADGFTYEAEAIREWLANGHDTSPMTNLKMEDCNLIPNHALHLAIQDWQNQW</sequence>
<comment type="function">
    <text evidence="1">Functions as an E3 ubiquitin ligase.</text>
</comment>
<comment type="catalytic activity">
    <reaction>
        <text>S-ubiquitinyl-[E2 ubiquitin-conjugating enzyme]-L-cysteine + [acceptor protein]-L-lysine = [E2 ubiquitin-conjugating enzyme]-L-cysteine + N(6)-ubiquitinyl-[acceptor protein]-L-lysine.</text>
        <dbReference type="EC" id="2.3.2.27"/>
    </reaction>
</comment>
<comment type="pathway">
    <text>Protein modification; protein ubiquitination.</text>
</comment>
<comment type="interaction">
    <interactant intactId="EBI-25519743">
        <id>Q94A51</id>
    </interactant>
    <interactant intactId="EBI-4426557">
        <id>Q84MB2</id>
        <label>TIFY8</label>
    </interactant>
    <organismsDiffer>false</organismsDiffer>
    <experiments>3</experiments>
</comment>
<comment type="alternative products">
    <event type="alternative splicing"/>
    <isoform>
        <id>Q94A51-1</id>
        <name>1</name>
        <sequence type="displayed"/>
    </isoform>
    <isoform>
        <id>Q94A51-2</id>
        <name>2</name>
        <sequence type="described" ref="VSP_031881"/>
    </isoform>
</comment>
<comment type="domain">
    <text>The protein kinase domain is predicted to be catalytically inactive.</text>
</comment>
<comment type="miscellaneous">
    <molecule>Isoform 2</molecule>
    <text evidence="6">May be due to a competing acceptor splice site.</text>
</comment>
<comment type="similarity">
    <text evidence="3">Belongs to the protein kinase superfamily. Ser/Thr protein kinase family.</text>
</comment>
<comment type="sequence caution" evidence="6">
    <conflict type="erroneous gene model prediction">
        <sequence resource="EMBL-CDS" id="CAB62004"/>
    </conflict>
    <text>The predicted gene At3g49060 has been split into 2 genes: At3g49055 and At3g49060.</text>
</comment>
<keyword id="KW-0025">Alternative splicing</keyword>
<keyword id="KW-0067">ATP-binding</keyword>
<keyword id="KW-0175">Coiled coil</keyword>
<keyword id="KW-0547">Nucleotide-binding</keyword>
<keyword id="KW-1185">Reference proteome</keyword>
<keyword id="KW-0808">Transferase</keyword>
<keyword id="KW-0833">Ubl conjugation pathway</keyword>
<feature type="chain" id="PRO_0000322139" description="U-box domain-containing protein 32">
    <location>
        <begin position="1"/>
        <end position="805"/>
    </location>
</feature>
<feature type="domain" description="Protein kinase" evidence="3">
    <location>
        <begin position="460"/>
        <end position="718"/>
    </location>
</feature>
<feature type="domain" description="U-box">
    <location>
        <begin position="734"/>
        <end position="805"/>
    </location>
</feature>
<feature type="region of interest" description="Disordered" evidence="4">
    <location>
        <begin position="181"/>
        <end position="205"/>
    </location>
</feature>
<feature type="region of interest" description="Disordered" evidence="4">
    <location>
        <begin position="226"/>
        <end position="284"/>
    </location>
</feature>
<feature type="coiled-coil region" evidence="2">
    <location>
        <begin position="331"/>
        <end position="434"/>
    </location>
</feature>
<feature type="compositionally biased region" description="Basic and acidic residues" evidence="4">
    <location>
        <begin position="226"/>
        <end position="239"/>
    </location>
</feature>
<feature type="compositionally biased region" description="Low complexity" evidence="4">
    <location>
        <begin position="245"/>
        <end position="257"/>
    </location>
</feature>
<feature type="binding site" evidence="3">
    <location>
        <begin position="466"/>
        <end position="474"/>
    </location>
    <ligand>
        <name>ATP</name>
        <dbReference type="ChEBI" id="CHEBI:30616"/>
    </ligand>
</feature>
<feature type="binding site" evidence="3">
    <location>
        <position position="487"/>
    </location>
    <ligand>
        <name>ATP</name>
        <dbReference type="ChEBI" id="CHEBI:30616"/>
    </ligand>
</feature>
<feature type="splice variant" id="VSP_031881" description="In isoform 2." evidence="5">
    <location>
        <begin position="1"/>
        <end position="296"/>
    </location>
</feature>
<feature type="sequence conflict" description="In Ref. 4; BAD44216." evidence="6" ref="4">
    <original>K</original>
    <variation>R</variation>
    <location>
        <position position="476"/>
    </location>
</feature>
<protein>
    <recommendedName>
        <fullName>U-box domain-containing protein 32</fullName>
        <ecNumber>2.3.2.27</ecNumber>
    </recommendedName>
    <alternativeName>
        <fullName>Plant U-box protein 32</fullName>
    </alternativeName>
    <alternativeName>
        <fullName evidence="6">RING-type E3 ubiquitin transferase PUB32</fullName>
    </alternativeName>
</protein>
<organism>
    <name type="scientific">Arabidopsis thaliana</name>
    <name type="common">Mouse-ear cress</name>
    <dbReference type="NCBI Taxonomy" id="3702"/>
    <lineage>
        <taxon>Eukaryota</taxon>
        <taxon>Viridiplantae</taxon>
        <taxon>Streptophyta</taxon>
        <taxon>Embryophyta</taxon>
        <taxon>Tracheophyta</taxon>
        <taxon>Spermatophyta</taxon>
        <taxon>Magnoliopsida</taxon>
        <taxon>eudicotyledons</taxon>
        <taxon>Gunneridae</taxon>
        <taxon>Pentapetalae</taxon>
        <taxon>rosids</taxon>
        <taxon>malvids</taxon>
        <taxon>Brassicales</taxon>
        <taxon>Brassicaceae</taxon>
        <taxon>Camelineae</taxon>
        <taxon>Arabidopsis</taxon>
    </lineage>
</organism>
<name>PUB32_ARATH</name>
<proteinExistence type="evidence at protein level"/>
<reference key="1">
    <citation type="journal article" date="2000" name="Nature">
        <title>Sequence and analysis of chromosome 3 of the plant Arabidopsis thaliana.</title>
        <authorList>
            <person name="Salanoubat M."/>
            <person name="Lemcke K."/>
            <person name="Rieger M."/>
            <person name="Ansorge W."/>
            <person name="Unseld M."/>
            <person name="Fartmann B."/>
            <person name="Valle G."/>
            <person name="Bloecker H."/>
            <person name="Perez-Alonso M."/>
            <person name="Obermaier B."/>
            <person name="Delseny M."/>
            <person name="Boutry M."/>
            <person name="Grivell L.A."/>
            <person name="Mache R."/>
            <person name="Puigdomenech P."/>
            <person name="De Simone V."/>
            <person name="Choisne N."/>
            <person name="Artiguenave F."/>
            <person name="Robert C."/>
            <person name="Brottier P."/>
            <person name="Wincker P."/>
            <person name="Cattolico L."/>
            <person name="Weissenbach J."/>
            <person name="Saurin W."/>
            <person name="Quetier F."/>
            <person name="Schaefer M."/>
            <person name="Mueller-Auer S."/>
            <person name="Gabel C."/>
            <person name="Fuchs M."/>
            <person name="Benes V."/>
            <person name="Wurmbach E."/>
            <person name="Drzonek H."/>
            <person name="Erfle H."/>
            <person name="Jordan N."/>
            <person name="Bangert S."/>
            <person name="Wiedelmann R."/>
            <person name="Kranz H."/>
            <person name="Voss H."/>
            <person name="Holland R."/>
            <person name="Brandt P."/>
            <person name="Nyakatura G."/>
            <person name="Vezzi A."/>
            <person name="D'Angelo M."/>
            <person name="Pallavicini A."/>
            <person name="Toppo S."/>
            <person name="Simionati B."/>
            <person name="Conrad A."/>
            <person name="Hornischer K."/>
            <person name="Kauer G."/>
            <person name="Loehnert T.-H."/>
            <person name="Nordsiek G."/>
            <person name="Reichelt J."/>
            <person name="Scharfe M."/>
            <person name="Schoen O."/>
            <person name="Bargues M."/>
            <person name="Terol J."/>
            <person name="Climent J."/>
            <person name="Navarro P."/>
            <person name="Collado C."/>
            <person name="Perez-Perez A."/>
            <person name="Ottenwaelder B."/>
            <person name="Duchemin D."/>
            <person name="Cooke R."/>
            <person name="Laudie M."/>
            <person name="Berger-Llauro C."/>
            <person name="Purnelle B."/>
            <person name="Masuy D."/>
            <person name="de Haan M."/>
            <person name="Maarse A.C."/>
            <person name="Alcaraz J.-P."/>
            <person name="Cottet A."/>
            <person name="Casacuberta E."/>
            <person name="Monfort A."/>
            <person name="Argiriou A."/>
            <person name="Flores M."/>
            <person name="Liguori R."/>
            <person name="Vitale D."/>
            <person name="Mannhaupt G."/>
            <person name="Haase D."/>
            <person name="Schoof H."/>
            <person name="Rudd S."/>
            <person name="Zaccaria P."/>
            <person name="Mewes H.-W."/>
            <person name="Mayer K.F.X."/>
            <person name="Kaul S."/>
            <person name="Town C.D."/>
            <person name="Koo H.L."/>
            <person name="Tallon L.J."/>
            <person name="Jenkins J."/>
            <person name="Rooney T."/>
            <person name="Rizzo M."/>
            <person name="Walts A."/>
            <person name="Utterback T."/>
            <person name="Fujii C.Y."/>
            <person name="Shea T.P."/>
            <person name="Creasy T.H."/>
            <person name="Haas B."/>
            <person name="Maiti R."/>
            <person name="Wu D."/>
            <person name="Peterson J."/>
            <person name="Van Aken S."/>
            <person name="Pai G."/>
            <person name="Militscher J."/>
            <person name="Sellers P."/>
            <person name="Gill J.E."/>
            <person name="Feldblyum T.V."/>
            <person name="Preuss D."/>
            <person name="Lin X."/>
            <person name="Nierman W.C."/>
            <person name="Salzberg S.L."/>
            <person name="White O."/>
            <person name="Venter J.C."/>
            <person name="Fraser C.M."/>
            <person name="Kaneko T."/>
            <person name="Nakamura Y."/>
            <person name="Sato S."/>
            <person name="Kato T."/>
            <person name="Asamizu E."/>
            <person name="Sasamoto S."/>
            <person name="Kimura T."/>
            <person name="Idesawa K."/>
            <person name="Kawashima K."/>
            <person name="Kishida Y."/>
            <person name="Kiyokawa C."/>
            <person name="Kohara M."/>
            <person name="Matsumoto M."/>
            <person name="Matsuno A."/>
            <person name="Muraki A."/>
            <person name="Nakayama S."/>
            <person name="Nakazaki N."/>
            <person name="Shinpo S."/>
            <person name="Takeuchi C."/>
            <person name="Wada T."/>
            <person name="Watanabe A."/>
            <person name="Yamada M."/>
            <person name="Yasuda M."/>
            <person name="Tabata S."/>
        </authorList>
    </citation>
    <scope>NUCLEOTIDE SEQUENCE [LARGE SCALE GENOMIC DNA]</scope>
    <source>
        <strain>cv. Columbia</strain>
    </source>
</reference>
<reference key="2">
    <citation type="journal article" date="2017" name="Plant J.">
        <title>Araport11: a complete reannotation of the Arabidopsis thaliana reference genome.</title>
        <authorList>
            <person name="Cheng C.Y."/>
            <person name="Krishnakumar V."/>
            <person name="Chan A.P."/>
            <person name="Thibaud-Nissen F."/>
            <person name="Schobel S."/>
            <person name="Town C.D."/>
        </authorList>
    </citation>
    <scope>GENOME REANNOTATION</scope>
    <source>
        <strain>cv. Columbia</strain>
    </source>
</reference>
<reference key="3">
    <citation type="journal article" date="2003" name="Science">
        <title>Empirical analysis of transcriptional activity in the Arabidopsis genome.</title>
        <authorList>
            <person name="Yamada K."/>
            <person name="Lim J."/>
            <person name="Dale J.M."/>
            <person name="Chen H."/>
            <person name="Shinn P."/>
            <person name="Palm C.J."/>
            <person name="Southwick A.M."/>
            <person name="Wu H.C."/>
            <person name="Kim C.J."/>
            <person name="Nguyen M."/>
            <person name="Pham P.K."/>
            <person name="Cheuk R.F."/>
            <person name="Karlin-Newmann G."/>
            <person name="Liu S.X."/>
            <person name="Lam B."/>
            <person name="Sakano H."/>
            <person name="Wu T."/>
            <person name="Yu G."/>
            <person name="Miranda M."/>
            <person name="Quach H.L."/>
            <person name="Tripp M."/>
            <person name="Chang C.H."/>
            <person name="Lee J.M."/>
            <person name="Toriumi M.J."/>
            <person name="Chan M.M."/>
            <person name="Tang C.C."/>
            <person name="Onodera C.S."/>
            <person name="Deng J.M."/>
            <person name="Akiyama K."/>
            <person name="Ansari Y."/>
            <person name="Arakawa T."/>
            <person name="Banh J."/>
            <person name="Banno F."/>
            <person name="Bowser L."/>
            <person name="Brooks S.Y."/>
            <person name="Carninci P."/>
            <person name="Chao Q."/>
            <person name="Choy N."/>
            <person name="Enju A."/>
            <person name="Goldsmith A.D."/>
            <person name="Gurjal M."/>
            <person name="Hansen N.F."/>
            <person name="Hayashizaki Y."/>
            <person name="Johnson-Hopson C."/>
            <person name="Hsuan V.W."/>
            <person name="Iida K."/>
            <person name="Karnes M."/>
            <person name="Khan S."/>
            <person name="Koesema E."/>
            <person name="Ishida J."/>
            <person name="Jiang P.X."/>
            <person name="Jones T."/>
            <person name="Kawai J."/>
            <person name="Kamiya A."/>
            <person name="Meyers C."/>
            <person name="Nakajima M."/>
            <person name="Narusaka M."/>
            <person name="Seki M."/>
            <person name="Sakurai T."/>
            <person name="Satou M."/>
            <person name="Tamse R."/>
            <person name="Vaysberg M."/>
            <person name="Wallender E.K."/>
            <person name="Wong C."/>
            <person name="Yamamura Y."/>
            <person name="Yuan S."/>
            <person name="Shinozaki K."/>
            <person name="Davis R.W."/>
            <person name="Theologis A."/>
            <person name="Ecker J.R."/>
        </authorList>
    </citation>
    <scope>NUCLEOTIDE SEQUENCE [LARGE SCALE MRNA] (ISOFORM 1)</scope>
    <source>
        <strain>cv. Columbia</strain>
    </source>
</reference>
<reference key="4">
    <citation type="submission" date="2004-09" db="EMBL/GenBank/DDBJ databases">
        <title>Large-scale analysis of RIKEN Arabidopsis full-length (RAFL) cDNAs.</title>
        <authorList>
            <person name="Totoki Y."/>
            <person name="Seki M."/>
            <person name="Ishida J."/>
            <person name="Nakajima M."/>
            <person name="Enju A."/>
            <person name="Kamiya A."/>
            <person name="Narusaka M."/>
            <person name="Shin-i T."/>
            <person name="Nakagawa M."/>
            <person name="Sakamoto N."/>
            <person name="Oishi K."/>
            <person name="Kohara Y."/>
            <person name="Kobayashi M."/>
            <person name="Toyoda A."/>
            <person name="Sakaki Y."/>
            <person name="Sakurai T."/>
            <person name="Iida K."/>
            <person name="Akiyama K."/>
            <person name="Satou M."/>
            <person name="Toyoda T."/>
            <person name="Konagaya A."/>
            <person name="Carninci P."/>
            <person name="Kawai J."/>
            <person name="Hayashizaki Y."/>
            <person name="Shinozaki K."/>
        </authorList>
    </citation>
    <scope>NUCLEOTIDE SEQUENCE [LARGE SCALE MRNA] (ISOFORMS 1 AND 2)</scope>
    <source>
        <strain>cv. Columbia</strain>
    </source>
</reference>
<reference key="5">
    <citation type="journal article" date="2001" name="Trends Plant Sci.">
        <title>The U-box protein family in plants.</title>
        <authorList>
            <person name="Azevedo C."/>
            <person name="Santos-Rosa M.J."/>
            <person name="Shirasu K."/>
        </authorList>
    </citation>
    <scope>GENE FAMILY ORGANIZATION</scope>
    <scope>NOMENCLATURE</scope>
</reference>
<evidence type="ECO:0000250" key="1"/>
<evidence type="ECO:0000255" key="2"/>
<evidence type="ECO:0000255" key="3">
    <source>
        <dbReference type="PROSITE-ProRule" id="PRU00159"/>
    </source>
</evidence>
<evidence type="ECO:0000256" key="4">
    <source>
        <dbReference type="SAM" id="MobiDB-lite"/>
    </source>
</evidence>
<evidence type="ECO:0000303" key="5">
    <source ref="4"/>
</evidence>
<evidence type="ECO:0000305" key="6"/>
<accession>Q94A51</accession>
<accession>Q67YL5</accession>
<accession>Q67YP5</accession>
<accession>Q9SMU3</accession>
<dbReference type="EC" id="2.3.2.27"/>
<dbReference type="EMBL" id="AL132967">
    <property type="protein sequence ID" value="CAB62004.1"/>
    <property type="status" value="ALT_SEQ"/>
    <property type="molecule type" value="Genomic_DNA"/>
</dbReference>
<dbReference type="EMBL" id="CP002686">
    <property type="protein sequence ID" value="AEE78494.1"/>
    <property type="molecule type" value="Genomic_DNA"/>
</dbReference>
<dbReference type="EMBL" id="AY050369">
    <property type="protein sequence ID" value="AAK91387.1"/>
    <property type="molecule type" value="mRNA"/>
</dbReference>
<dbReference type="EMBL" id="BT004526">
    <property type="protein sequence ID" value="AAO42772.1"/>
    <property type="molecule type" value="mRNA"/>
</dbReference>
<dbReference type="EMBL" id="AK176246">
    <property type="protein sequence ID" value="BAD44009.1"/>
    <property type="molecule type" value="mRNA"/>
</dbReference>
<dbReference type="EMBL" id="AK176327">
    <property type="protein sequence ID" value="BAD44090.1"/>
    <property type="molecule type" value="mRNA"/>
</dbReference>
<dbReference type="EMBL" id="AK176453">
    <property type="protein sequence ID" value="BAD44216.1"/>
    <property type="molecule type" value="mRNA"/>
</dbReference>
<dbReference type="EMBL" id="AK176423">
    <property type="protein sequence ID" value="BAD44186.1"/>
    <property type="molecule type" value="mRNA"/>
</dbReference>
<dbReference type="PIR" id="T46124">
    <property type="entry name" value="T46124"/>
</dbReference>
<dbReference type="RefSeq" id="NP_566915.1">
    <molecule id="Q94A51-1"/>
    <property type="nucleotide sequence ID" value="NM_114765.3"/>
</dbReference>
<dbReference type="SMR" id="Q94A51"/>
<dbReference type="BioGRID" id="9386">
    <property type="interactions" value="1"/>
</dbReference>
<dbReference type="FunCoup" id="Q94A51">
    <property type="interactions" value="429"/>
</dbReference>
<dbReference type="IntAct" id="Q94A51">
    <property type="interactions" value="1"/>
</dbReference>
<dbReference type="STRING" id="3702.Q94A51"/>
<dbReference type="iPTMnet" id="Q94A51"/>
<dbReference type="PaxDb" id="3702-AT3G49060.1"/>
<dbReference type="EnsemblPlants" id="AT3G49060.1">
    <molecule id="Q94A51-1"/>
    <property type="protein sequence ID" value="AT3G49060.1"/>
    <property type="gene ID" value="AT3G49060"/>
</dbReference>
<dbReference type="GeneID" id="824068"/>
<dbReference type="Gramene" id="AT3G49060.1">
    <molecule id="Q94A51-1"/>
    <property type="protein sequence ID" value="AT3G49060.1"/>
    <property type="gene ID" value="AT3G49060"/>
</dbReference>
<dbReference type="KEGG" id="ath:AT3G49060"/>
<dbReference type="Araport" id="AT3G49060"/>
<dbReference type="TAIR" id="AT3G49060"/>
<dbReference type="eggNOG" id="ENOG502QZPS">
    <property type="taxonomic scope" value="Eukaryota"/>
</dbReference>
<dbReference type="InParanoid" id="Q94A51"/>
<dbReference type="OMA" id="YVDPECI"/>
<dbReference type="PhylomeDB" id="Q94A51"/>
<dbReference type="UniPathway" id="UPA00143"/>
<dbReference type="PRO" id="PR:Q94A51"/>
<dbReference type="Proteomes" id="UP000006548">
    <property type="component" value="Chromosome 3"/>
</dbReference>
<dbReference type="ExpressionAtlas" id="Q94A51">
    <property type="expression patterns" value="baseline and differential"/>
</dbReference>
<dbReference type="GO" id="GO:0005524">
    <property type="term" value="F:ATP binding"/>
    <property type="evidence" value="ECO:0007669"/>
    <property type="project" value="UniProtKB-KW"/>
</dbReference>
<dbReference type="GO" id="GO:0004672">
    <property type="term" value="F:protein kinase activity"/>
    <property type="evidence" value="ECO:0007669"/>
    <property type="project" value="InterPro"/>
</dbReference>
<dbReference type="GO" id="GO:0004842">
    <property type="term" value="F:ubiquitin-protein transferase activity"/>
    <property type="evidence" value="ECO:0007669"/>
    <property type="project" value="InterPro"/>
</dbReference>
<dbReference type="GO" id="GO:0016567">
    <property type="term" value="P:protein ubiquitination"/>
    <property type="evidence" value="ECO:0007669"/>
    <property type="project" value="UniProtKB-UniPathway"/>
</dbReference>
<dbReference type="CDD" id="cd16655">
    <property type="entry name" value="RING-Ubox_WDSUB1-like"/>
    <property type="match status" value="1"/>
</dbReference>
<dbReference type="CDD" id="cd01989">
    <property type="entry name" value="USP_STK_Ubox_N"/>
    <property type="match status" value="1"/>
</dbReference>
<dbReference type="FunFam" id="3.30.40.10:FF:000428">
    <property type="entry name" value="U-box domain-containing protein 54"/>
    <property type="match status" value="1"/>
</dbReference>
<dbReference type="FunFam" id="1.10.510.10:FF:001524">
    <property type="entry name" value="U-box domain-containing protein kinase family protein"/>
    <property type="match status" value="1"/>
</dbReference>
<dbReference type="Gene3D" id="3.40.50.620">
    <property type="entry name" value="HUPs"/>
    <property type="match status" value="1"/>
</dbReference>
<dbReference type="Gene3D" id="3.30.200.20">
    <property type="entry name" value="Phosphorylase Kinase, domain 1"/>
    <property type="match status" value="1"/>
</dbReference>
<dbReference type="Gene3D" id="1.10.510.10">
    <property type="entry name" value="Transferase(Phosphotransferase) domain 1"/>
    <property type="match status" value="1"/>
</dbReference>
<dbReference type="Gene3D" id="3.30.40.10">
    <property type="entry name" value="Zinc/RING finger domain, C3HC4 (zinc finger)"/>
    <property type="match status" value="1"/>
</dbReference>
<dbReference type="InterPro" id="IPR011009">
    <property type="entry name" value="Kinase-like_dom_sf"/>
</dbReference>
<dbReference type="InterPro" id="IPR000719">
    <property type="entry name" value="Prot_kinase_dom"/>
</dbReference>
<dbReference type="InterPro" id="IPR017441">
    <property type="entry name" value="Protein_kinase_ATP_BS"/>
</dbReference>
<dbReference type="InterPro" id="IPR014729">
    <property type="entry name" value="Rossmann-like_a/b/a_fold"/>
</dbReference>
<dbReference type="InterPro" id="IPR001245">
    <property type="entry name" value="Ser-Thr/Tyr_kinase_cat_dom"/>
</dbReference>
<dbReference type="InterPro" id="IPR051348">
    <property type="entry name" value="U-box_ubiquitin_ligases"/>
</dbReference>
<dbReference type="InterPro" id="IPR003613">
    <property type="entry name" value="Ubox_domain"/>
</dbReference>
<dbReference type="InterPro" id="IPR013083">
    <property type="entry name" value="Znf_RING/FYVE/PHD"/>
</dbReference>
<dbReference type="PANTHER" id="PTHR45647">
    <property type="entry name" value="OS02G0152300 PROTEIN"/>
    <property type="match status" value="1"/>
</dbReference>
<dbReference type="PANTHER" id="PTHR45647:SF22">
    <property type="entry name" value="U-BOX DOMAIN-CONTAINING PROTEIN 32"/>
    <property type="match status" value="1"/>
</dbReference>
<dbReference type="Pfam" id="PF07714">
    <property type="entry name" value="PK_Tyr_Ser-Thr"/>
    <property type="match status" value="1"/>
</dbReference>
<dbReference type="Pfam" id="PF04564">
    <property type="entry name" value="U-box"/>
    <property type="match status" value="1"/>
</dbReference>
<dbReference type="SMART" id="SM00504">
    <property type="entry name" value="Ubox"/>
    <property type="match status" value="1"/>
</dbReference>
<dbReference type="SUPFAM" id="SSF56112">
    <property type="entry name" value="Protein kinase-like (PK-like)"/>
    <property type="match status" value="1"/>
</dbReference>
<dbReference type="SUPFAM" id="SSF57850">
    <property type="entry name" value="RING/U-box"/>
    <property type="match status" value="1"/>
</dbReference>
<dbReference type="PROSITE" id="PS00107">
    <property type="entry name" value="PROTEIN_KINASE_ATP"/>
    <property type="match status" value="1"/>
</dbReference>
<dbReference type="PROSITE" id="PS50011">
    <property type="entry name" value="PROTEIN_KINASE_DOM"/>
    <property type="match status" value="1"/>
</dbReference>
<dbReference type="PROSITE" id="PS51698">
    <property type="entry name" value="U_BOX"/>
    <property type="match status" value="1"/>
</dbReference>